<gene>
    <name evidence="1" type="primary">secB</name>
    <name type="ordered locus">SCH_3624</name>
</gene>
<keyword id="KW-0143">Chaperone</keyword>
<keyword id="KW-0963">Cytoplasm</keyword>
<keyword id="KW-0653">Protein transport</keyword>
<keyword id="KW-0811">Translocation</keyword>
<keyword id="KW-0813">Transport</keyword>
<proteinExistence type="inferred from homology"/>
<protein>
    <recommendedName>
        <fullName evidence="1">Protein-export protein SecB</fullName>
    </recommendedName>
</protein>
<organism>
    <name type="scientific">Salmonella choleraesuis (strain SC-B67)</name>
    <dbReference type="NCBI Taxonomy" id="321314"/>
    <lineage>
        <taxon>Bacteria</taxon>
        <taxon>Pseudomonadati</taxon>
        <taxon>Pseudomonadota</taxon>
        <taxon>Gammaproteobacteria</taxon>
        <taxon>Enterobacterales</taxon>
        <taxon>Enterobacteriaceae</taxon>
        <taxon>Salmonella</taxon>
    </lineage>
</organism>
<evidence type="ECO:0000255" key="1">
    <source>
        <dbReference type="HAMAP-Rule" id="MF_00821"/>
    </source>
</evidence>
<sequence length="155" mass="17245">MSEQNNTEMAFQIQRIYTKDVSFEAPNAPHVFQKDWQPEVKLDLDTASSQLADDVYEVVLRVTVTASLGEETAFLCEVQQAGIFSISGIEGTQMAHCLGAYCPNILFPYARECITSLVSRGTFPQLNLAPVNFDALFMNYLQQQAGEGTEEHQDA</sequence>
<dbReference type="EMBL" id="AE017220">
    <property type="protein sequence ID" value="AAX67530.1"/>
    <property type="molecule type" value="Genomic_DNA"/>
</dbReference>
<dbReference type="RefSeq" id="WP_000003370.1">
    <property type="nucleotide sequence ID" value="NC_006905.1"/>
</dbReference>
<dbReference type="SMR" id="Q57ID2"/>
<dbReference type="KEGG" id="sec:SCH_3624"/>
<dbReference type="HOGENOM" id="CLU_111574_1_0_6"/>
<dbReference type="Proteomes" id="UP000000538">
    <property type="component" value="Chromosome"/>
</dbReference>
<dbReference type="GO" id="GO:0005737">
    <property type="term" value="C:cytoplasm"/>
    <property type="evidence" value="ECO:0007669"/>
    <property type="project" value="UniProtKB-SubCell"/>
</dbReference>
<dbReference type="GO" id="GO:0051082">
    <property type="term" value="F:unfolded protein binding"/>
    <property type="evidence" value="ECO:0007669"/>
    <property type="project" value="InterPro"/>
</dbReference>
<dbReference type="GO" id="GO:0006457">
    <property type="term" value="P:protein folding"/>
    <property type="evidence" value="ECO:0007669"/>
    <property type="project" value="UniProtKB-UniRule"/>
</dbReference>
<dbReference type="GO" id="GO:0051262">
    <property type="term" value="P:protein tetramerization"/>
    <property type="evidence" value="ECO:0007669"/>
    <property type="project" value="InterPro"/>
</dbReference>
<dbReference type="GO" id="GO:0015031">
    <property type="term" value="P:protein transport"/>
    <property type="evidence" value="ECO:0007669"/>
    <property type="project" value="UniProtKB-UniRule"/>
</dbReference>
<dbReference type="CDD" id="cd00557">
    <property type="entry name" value="Translocase_SecB"/>
    <property type="match status" value="1"/>
</dbReference>
<dbReference type="FunFam" id="3.10.420.10:FF:000001">
    <property type="entry name" value="Protein-export chaperone SecB"/>
    <property type="match status" value="1"/>
</dbReference>
<dbReference type="Gene3D" id="3.10.420.10">
    <property type="entry name" value="SecB-like"/>
    <property type="match status" value="1"/>
</dbReference>
<dbReference type="HAMAP" id="MF_00821">
    <property type="entry name" value="SecB"/>
    <property type="match status" value="1"/>
</dbReference>
<dbReference type="InterPro" id="IPR003708">
    <property type="entry name" value="SecB"/>
</dbReference>
<dbReference type="InterPro" id="IPR035958">
    <property type="entry name" value="SecB-like_sf"/>
</dbReference>
<dbReference type="NCBIfam" id="NF004390">
    <property type="entry name" value="PRK05751.1-1"/>
    <property type="match status" value="1"/>
</dbReference>
<dbReference type="NCBIfam" id="NF004393">
    <property type="entry name" value="PRK05751.1-4"/>
    <property type="match status" value="1"/>
</dbReference>
<dbReference type="NCBIfam" id="TIGR00809">
    <property type="entry name" value="secB"/>
    <property type="match status" value="1"/>
</dbReference>
<dbReference type="PANTHER" id="PTHR36918">
    <property type="match status" value="1"/>
</dbReference>
<dbReference type="PANTHER" id="PTHR36918:SF1">
    <property type="entry name" value="PROTEIN-EXPORT PROTEIN SECB"/>
    <property type="match status" value="1"/>
</dbReference>
<dbReference type="Pfam" id="PF02556">
    <property type="entry name" value="SecB"/>
    <property type="match status" value="1"/>
</dbReference>
<dbReference type="PRINTS" id="PR01594">
    <property type="entry name" value="SECBCHAPRONE"/>
</dbReference>
<dbReference type="SUPFAM" id="SSF54611">
    <property type="entry name" value="SecB-like"/>
    <property type="match status" value="1"/>
</dbReference>
<feature type="chain" id="PRO_0000055412" description="Protein-export protein SecB">
    <location>
        <begin position="1"/>
        <end position="155"/>
    </location>
</feature>
<comment type="function">
    <text evidence="1">One of the proteins required for the normal export of preproteins out of the cell cytoplasm. It is a molecular chaperone that binds to a subset of precursor proteins, maintaining them in a translocation-competent state. It also specifically binds to its receptor SecA.</text>
</comment>
<comment type="subunit">
    <text evidence="1">Homotetramer, a dimer of dimers. One homotetramer interacts with 1 SecA dimer.</text>
</comment>
<comment type="subcellular location">
    <subcellularLocation>
        <location evidence="1">Cytoplasm</location>
    </subcellularLocation>
</comment>
<comment type="similarity">
    <text evidence="1">Belongs to the SecB family.</text>
</comment>
<reference key="1">
    <citation type="journal article" date="2005" name="Nucleic Acids Res.">
        <title>The genome sequence of Salmonella enterica serovar Choleraesuis, a highly invasive and resistant zoonotic pathogen.</title>
        <authorList>
            <person name="Chiu C.-H."/>
            <person name="Tang P."/>
            <person name="Chu C."/>
            <person name="Hu S."/>
            <person name="Bao Q."/>
            <person name="Yu J."/>
            <person name="Chou Y.-Y."/>
            <person name="Wang H.-S."/>
            <person name="Lee Y.-S."/>
        </authorList>
    </citation>
    <scope>NUCLEOTIDE SEQUENCE [LARGE SCALE GENOMIC DNA]</scope>
    <source>
        <strain>SC-B67</strain>
    </source>
</reference>
<name>SECB_SALCH</name>
<accession>Q57ID2</accession>